<keyword id="KW-0963">Cytoplasm</keyword>
<keyword id="KW-0251">Elongation factor</keyword>
<keyword id="KW-0342">GTP-binding</keyword>
<keyword id="KW-0378">Hydrolase</keyword>
<keyword id="KW-0460">Magnesium</keyword>
<keyword id="KW-0479">Metal-binding</keyword>
<keyword id="KW-0547">Nucleotide-binding</keyword>
<keyword id="KW-0648">Protein biosynthesis</keyword>
<evidence type="ECO:0000250" key="1"/>
<evidence type="ECO:0000255" key="2">
    <source>
        <dbReference type="HAMAP-Rule" id="MF_00118"/>
    </source>
</evidence>
<accession>B7HJ46</accession>
<sequence>MAKAKFERSKPHVNIGTIGHVDHGKTTLTAAITTVLAKAGGAEARGYDQIDAAPEERERGITISTAHVEYETETRHYAHVDCPGHADYVKNMITGAAQMDGGILVVSAADGPMPQTREHILLSRQVGVPYIVVFLNKCDMVDDEELLELVEMEVRDLLSEYGFPGDDIPVIKGSALKALQGEADWEAKIIELMAEVDAYIPTPERETDKPFLMPVEDVFSITGRGTVATGRVERGIVKVGDVVEIIGLAEENASTTVTGVEMFRKLLDQAQAGDNIGALLRGVAREDIQRGQVLAKSGSVKAHAKFKAEVFVLSKEEGGRHTPFFANYRPQFYFRTTDVTGIIQLPEGTEMVMPGDNIEMTIELIAPIAIEEGTKFSIREGGRTVGYGVVATIVE</sequence>
<dbReference type="EC" id="3.6.5.3" evidence="2"/>
<dbReference type="EMBL" id="CP001176">
    <property type="protein sequence ID" value="ACK63027.1"/>
    <property type="molecule type" value="Genomic_DNA"/>
</dbReference>
<dbReference type="RefSeq" id="WP_001029614.1">
    <property type="nucleotide sequence ID" value="NZ_VEHB01000017.1"/>
</dbReference>
<dbReference type="SMR" id="B7HJ46"/>
<dbReference type="GeneID" id="93010945"/>
<dbReference type="KEGG" id="bcb:BCB4264_A0129"/>
<dbReference type="HOGENOM" id="CLU_007265_0_1_9"/>
<dbReference type="Proteomes" id="UP000007096">
    <property type="component" value="Chromosome"/>
</dbReference>
<dbReference type="GO" id="GO:0005829">
    <property type="term" value="C:cytosol"/>
    <property type="evidence" value="ECO:0007669"/>
    <property type="project" value="TreeGrafter"/>
</dbReference>
<dbReference type="GO" id="GO:0005525">
    <property type="term" value="F:GTP binding"/>
    <property type="evidence" value="ECO:0007669"/>
    <property type="project" value="UniProtKB-UniRule"/>
</dbReference>
<dbReference type="GO" id="GO:0003924">
    <property type="term" value="F:GTPase activity"/>
    <property type="evidence" value="ECO:0007669"/>
    <property type="project" value="InterPro"/>
</dbReference>
<dbReference type="GO" id="GO:0003746">
    <property type="term" value="F:translation elongation factor activity"/>
    <property type="evidence" value="ECO:0007669"/>
    <property type="project" value="UniProtKB-UniRule"/>
</dbReference>
<dbReference type="CDD" id="cd01884">
    <property type="entry name" value="EF_Tu"/>
    <property type="match status" value="1"/>
</dbReference>
<dbReference type="CDD" id="cd03697">
    <property type="entry name" value="EFTU_II"/>
    <property type="match status" value="1"/>
</dbReference>
<dbReference type="CDD" id="cd03707">
    <property type="entry name" value="EFTU_III"/>
    <property type="match status" value="1"/>
</dbReference>
<dbReference type="FunFam" id="2.40.30.10:FF:000001">
    <property type="entry name" value="Elongation factor Tu"/>
    <property type="match status" value="1"/>
</dbReference>
<dbReference type="FunFam" id="3.40.50.300:FF:000003">
    <property type="entry name" value="Elongation factor Tu"/>
    <property type="match status" value="1"/>
</dbReference>
<dbReference type="Gene3D" id="3.40.50.300">
    <property type="entry name" value="P-loop containing nucleotide triphosphate hydrolases"/>
    <property type="match status" value="1"/>
</dbReference>
<dbReference type="Gene3D" id="2.40.30.10">
    <property type="entry name" value="Translation factors"/>
    <property type="match status" value="2"/>
</dbReference>
<dbReference type="HAMAP" id="MF_00118_B">
    <property type="entry name" value="EF_Tu_B"/>
    <property type="match status" value="1"/>
</dbReference>
<dbReference type="InterPro" id="IPR041709">
    <property type="entry name" value="EF-Tu_GTP-bd"/>
</dbReference>
<dbReference type="InterPro" id="IPR050055">
    <property type="entry name" value="EF-Tu_GTPase"/>
</dbReference>
<dbReference type="InterPro" id="IPR004161">
    <property type="entry name" value="EFTu-like_2"/>
</dbReference>
<dbReference type="InterPro" id="IPR033720">
    <property type="entry name" value="EFTU_2"/>
</dbReference>
<dbReference type="InterPro" id="IPR031157">
    <property type="entry name" value="G_TR_CS"/>
</dbReference>
<dbReference type="InterPro" id="IPR027417">
    <property type="entry name" value="P-loop_NTPase"/>
</dbReference>
<dbReference type="InterPro" id="IPR005225">
    <property type="entry name" value="Small_GTP-bd"/>
</dbReference>
<dbReference type="InterPro" id="IPR000795">
    <property type="entry name" value="T_Tr_GTP-bd_dom"/>
</dbReference>
<dbReference type="InterPro" id="IPR009000">
    <property type="entry name" value="Transl_B-barrel_sf"/>
</dbReference>
<dbReference type="InterPro" id="IPR009001">
    <property type="entry name" value="Transl_elong_EF1A/Init_IF2_C"/>
</dbReference>
<dbReference type="InterPro" id="IPR004541">
    <property type="entry name" value="Transl_elong_EFTu/EF1A_bac/org"/>
</dbReference>
<dbReference type="InterPro" id="IPR004160">
    <property type="entry name" value="Transl_elong_EFTu/EF1A_C"/>
</dbReference>
<dbReference type="NCBIfam" id="TIGR00485">
    <property type="entry name" value="EF-Tu"/>
    <property type="match status" value="1"/>
</dbReference>
<dbReference type="NCBIfam" id="NF000766">
    <property type="entry name" value="PRK00049.1"/>
    <property type="match status" value="1"/>
</dbReference>
<dbReference type="NCBIfam" id="NF009372">
    <property type="entry name" value="PRK12735.1"/>
    <property type="match status" value="1"/>
</dbReference>
<dbReference type="NCBIfam" id="NF009373">
    <property type="entry name" value="PRK12736.1"/>
    <property type="match status" value="1"/>
</dbReference>
<dbReference type="NCBIfam" id="TIGR00231">
    <property type="entry name" value="small_GTP"/>
    <property type="match status" value="1"/>
</dbReference>
<dbReference type="PANTHER" id="PTHR43721:SF22">
    <property type="entry name" value="ELONGATION FACTOR TU, MITOCHONDRIAL"/>
    <property type="match status" value="1"/>
</dbReference>
<dbReference type="PANTHER" id="PTHR43721">
    <property type="entry name" value="ELONGATION FACTOR TU-RELATED"/>
    <property type="match status" value="1"/>
</dbReference>
<dbReference type="Pfam" id="PF00009">
    <property type="entry name" value="GTP_EFTU"/>
    <property type="match status" value="1"/>
</dbReference>
<dbReference type="Pfam" id="PF03144">
    <property type="entry name" value="GTP_EFTU_D2"/>
    <property type="match status" value="1"/>
</dbReference>
<dbReference type="Pfam" id="PF03143">
    <property type="entry name" value="GTP_EFTU_D3"/>
    <property type="match status" value="1"/>
</dbReference>
<dbReference type="PRINTS" id="PR00315">
    <property type="entry name" value="ELONGATNFCT"/>
</dbReference>
<dbReference type="SUPFAM" id="SSF50465">
    <property type="entry name" value="EF-Tu/eEF-1alpha/eIF2-gamma C-terminal domain"/>
    <property type="match status" value="1"/>
</dbReference>
<dbReference type="SUPFAM" id="SSF52540">
    <property type="entry name" value="P-loop containing nucleoside triphosphate hydrolases"/>
    <property type="match status" value="1"/>
</dbReference>
<dbReference type="SUPFAM" id="SSF50447">
    <property type="entry name" value="Translation proteins"/>
    <property type="match status" value="1"/>
</dbReference>
<dbReference type="PROSITE" id="PS00301">
    <property type="entry name" value="G_TR_1"/>
    <property type="match status" value="1"/>
</dbReference>
<dbReference type="PROSITE" id="PS51722">
    <property type="entry name" value="G_TR_2"/>
    <property type="match status" value="1"/>
</dbReference>
<comment type="function">
    <text evidence="2">GTP hydrolase that promotes the GTP-dependent binding of aminoacyl-tRNA to the A-site of ribosomes during protein biosynthesis.</text>
</comment>
<comment type="catalytic activity">
    <reaction evidence="2">
        <text>GTP + H2O = GDP + phosphate + H(+)</text>
        <dbReference type="Rhea" id="RHEA:19669"/>
        <dbReference type="ChEBI" id="CHEBI:15377"/>
        <dbReference type="ChEBI" id="CHEBI:15378"/>
        <dbReference type="ChEBI" id="CHEBI:37565"/>
        <dbReference type="ChEBI" id="CHEBI:43474"/>
        <dbReference type="ChEBI" id="CHEBI:58189"/>
        <dbReference type="EC" id="3.6.5.3"/>
    </reaction>
    <physiologicalReaction direction="left-to-right" evidence="2">
        <dbReference type="Rhea" id="RHEA:19670"/>
    </physiologicalReaction>
</comment>
<comment type="subunit">
    <text evidence="2">Monomer.</text>
</comment>
<comment type="subcellular location">
    <subcellularLocation>
        <location evidence="2">Cytoplasm</location>
    </subcellularLocation>
</comment>
<comment type="similarity">
    <text evidence="2">Belongs to the TRAFAC class translation factor GTPase superfamily. Classic translation factor GTPase family. EF-Tu/EF-1A subfamily.</text>
</comment>
<name>EFTU_BACC4</name>
<reference key="1">
    <citation type="submission" date="2008-10" db="EMBL/GenBank/DDBJ databases">
        <title>Genome sequence of Bacillus cereus B4264.</title>
        <authorList>
            <person name="Dodson R.J."/>
            <person name="Durkin A.S."/>
            <person name="Rosovitz M.J."/>
            <person name="Rasko D.A."/>
            <person name="Hoffmaster A."/>
            <person name="Ravel J."/>
            <person name="Sutton G."/>
        </authorList>
    </citation>
    <scope>NUCLEOTIDE SEQUENCE [LARGE SCALE GENOMIC DNA]</scope>
    <source>
        <strain>B4264</strain>
    </source>
</reference>
<proteinExistence type="inferred from homology"/>
<organism>
    <name type="scientific">Bacillus cereus (strain B4264)</name>
    <dbReference type="NCBI Taxonomy" id="405532"/>
    <lineage>
        <taxon>Bacteria</taxon>
        <taxon>Bacillati</taxon>
        <taxon>Bacillota</taxon>
        <taxon>Bacilli</taxon>
        <taxon>Bacillales</taxon>
        <taxon>Bacillaceae</taxon>
        <taxon>Bacillus</taxon>
        <taxon>Bacillus cereus group</taxon>
    </lineage>
</organism>
<protein>
    <recommendedName>
        <fullName evidence="2">Elongation factor Tu</fullName>
        <shortName evidence="2">EF-Tu</shortName>
        <ecNumber evidence="2">3.6.5.3</ecNumber>
    </recommendedName>
</protein>
<gene>
    <name evidence="2" type="primary">tuf</name>
    <name type="ordered locus">BCB4264_A0129</name>
</gene>
<feature type="chain" id="PRO_1000201384" description="Elongation factor Tu">
    <location>
        <begin position="1"/>
        <end position="395"/>
    </location>
</feature>
<feature type="domain" description="tr-type G">
    <location>
        <begin position="10"/>
        <end position="204"/>
    </location>
</feature>
<feature type="region of interest" description="G1" evidence="1">
    <location>
        <begin position="19"/>
        <end position="26"/>
    </location>
</feature>
<feature type="region of interest" description="G2" evidence="1">
    <location>
        <begin position="60"/>
        <end position="64"/>
    </location>
</feature>
<feature type="region of interest" description="G3" evidence="1">
    <location>
        <begin position="81"/>
        <end position="84"/>
    </location>
</feature>
<feature type="region of interest" description="G4" evidence="1">
    <location>
        <begin position="136"/>
        <end position="139"/>
    </location>
</feature>
<feature type="region of interest" description="G5" evidence="1">
    <location>
        <begin position="174"/>
        <end position="176"/>
    </location>
</feature>
<feature type="binding site" evidence="2">
    <location>
        <begin position="19"/>
        <end position="26"/>
    </location>
    <ligand>
        <name>GTP</name>
        <dbReference type="ChEBI" id="CHEBI:37565"/>
    </ligand>
</feature>
<feature type="binding site" evidence="2">
    <location>
        <position position="26"/>
    </location>
    <ligand>
        <name>Mg(2+)</name>
        <dbReference type="ChEBI" id="CHEBI:18420"/>
    </ligand>
</feature>
<feature type="binding site" evidence="2">
    <location>
        <begin position="81"/>
        <end position="85"/>
    </location>
    <ligand>
        <name>GTP</name>
        <dbReference type="ChEBI" id="CHEBI:37565"/>
    </ligand>
</feature>
<feature type="binding site" evidence="2">
    <location>
        <begin position="136"/>
        <end position="139"/>
    </location>
    <ligand>
        <name>GTP</name>
        <dbReference type="ChEBI" id="CHEBI:37565"/>
    </ligand>
</feature>